<protein>
    <recommendedName>
        <fullName evidence="1">Large ribosomal subunit protein bL21</fullName>
    </recommendedName>
    <alternativeName>
        <fullName evidence="3">50S ribosomal protein L21</fullName>
    </alternativeName>
</protein>
<sequence>MFAVIKTGGKQYKVAEGDTIVIERLAAAAGETVTFDSVLMVGAGAGVTVGAPMVAGATVTGEVAAEVRGPKLITRKKRQRQTYRRTIGHRQDLMEVTITSINTDGKAPAKKAAAKKEEAPKADTAPKAAAAPTEEAAAGGDNLKKITGIGPALEKKLNAAGITTFAQIAALSADDIAKLEEELSLAGRFAKDGWVEQAAELAKEA</sequence>
<accession>Q0BZ42</accession>
<gene>
    <name evidence="1" type="primary">rplU</name>
    <name type="ordered locus">HNE_2559</name>
</gene>
<comment type="function">
    <text evidence="1">This protein binds to 23S rRNA in the presence of protein L20.</text>
</comment>
<comment type="subunit">
    <text evidence="1">Part of the 50S ribosomal subunit. Contacts protein L20.</text>
</comment>
<comment type="similarity">
    <text evidence="1">Belongs to the bacterial ribosomal protein bL21 family.</text>
</comment>
<evidence type="ECO:0000255" key="1">
    <source>
        <dbReference type="HAMAP-Rule" id="MF_01363"/>
    </source>
</evidence>
<evidence type="ECO:0000256" key="2">
    <source>
        <dbReference type="SAM" id="MobiDB-lite"/>
    </source>
</evidence>
<evidence type="ECO:0000305" key="3"/>
<feature type="chain" id="PRO_0000270676" description="Large ribosomal subunit protein bL21">
    <location>
        <begin position="1"/>
        <end position="205"/>
    </location>
</feature>
<feature type="region of interest" description="Disordered" evidence="2">
    <location>
        <begin position="107"/>
        <end position="137"/>
    </location>
</feature>
<feature type="compositionally biased region" description="Low complexity" evidence="2">
    <location>
        <begin position="122"/>
        <end position="137"/>
    </location>
</feature>
<proteinExistence type="inferred from homology"/>
<name>RL21_HYPNA</name>
<dbReference type="EMBL" id="CP000158">
    <property type="protein sequence ID" value="ABI76659.1"/>
    <property type="molecule type" value="Genomic_DNA"/>
</dbReference>
<dbReference type="RefSeq" id="WP_011647549.1">
    <property type="nucleotide sequence ID" value="NC_008358.1"/>
</dbReference>
<dbReference type="SMR" id="Q0BZ42"/>
<dbReference type="STRING" id="228405.HNE_2559"/>
<dbReference type="KEGG" id="hne:HNE_2559"/>
<dbReference type="eggNOG" id="COG0261">
    <property type="taxonomic scope" value="Bacteria"/>
</dbReference>
<dbReference type="eggNOG" id="COG3743">
    <property type="taxonomic scope" value="Bacteria"/>
</dbReference>
<dbReference type="HOGENOM" id="CLU_061463_1_0_5"/>
<dbReference type="Proteomes" id="UP000001959">
    <property type="component" value="Chromosome"/>
</dbReference>
<dbReference type="GO" id="GO:0005737">
    <property type="term" value="C:cytoplasm"/>
    <property type="evidence" value="ECO:0007669"/>
    <property type="project" value="UniProtKB-ARBA"/>
</dbReference>
<dbReference type="GO" id="GO:1990904">
    <property type="term" value="C:ribonucleoprotein complex"/>
    <property type="evidence" value="ECO:0007669"/>
    <property type="project" value="UniProtKB-KW"/>
</dbReference>
<dbReference type="GO" id="GO:0005840">
    <property type="term" value="C:ribosome"/>
    <property type="evidence" value="ECO:0007669"/>
    <property type="project" value="UniProtKB-KW"/>
</dbReference>
<dbReference type="GO" id="GO:0019843">
    <property type="term" value="F:rRNA binding"/>
    <property type="evidence" value="ECO:0007669"/>
    <property type="project" value="UniProtKB-UniRule"/>
</dbReference>
<dbReference type="GO" id="GO:0003735">
    <property type="term" value="F:structural constituent of ribosome"/>
    <property type="evidence" value="ECO:0007669"/>
    <property type="project" value="InterPro"/>
</dbReference>
<dbReference type="GO" id="GO:0006412">
    <property type="term" value="P:translation"/>
    <property type="evidence" value="ECO:0007669"/>
    <property type="project" value="UniProtKB-UniRule"/>
</dbReference>
<dbReference type="Gene3D" id="1.10.150.20">
    <property type="entry name" value="5' to 3' exonuclease, C-terminal subdomain"/>
    <property type="match status" value="1"/>
</dbReference>
<dbReference type="HAMAP" id="MF_01363">
    <property type="entry name" value="Ribosomal_bL21"/>
    <property type="match status" value="1"/>
</dbReference>
<dbReference type="InterPro" id="IPR028909">
    <property type="entry name" value="bL21-like"/>
</dbReference>
<dbReference type="InterPro" id="IPR036164">
    <property type="entry name" value="bL21-like_sf"/>
</dbReference>
<dbReference type="InterPro" id="IPR001787">
    <property type="entry name" value="Ribosomal_bL21"/>
</dbReference>
<dbReference type="NCBIfam" id="TIGR00061">
    <property type="entry name" value="L21"/>
    <property type="match status" value="1"/>
</dbReference>
<dbReference type="NCBIfam" id="NF008916">
    <property type="entry name" value="PRK12278.1-4"/>
    <property type="match status" value="1"/>
</dbReference>
<dbReference type="PANTHER" id="PTHR21349">
    <property type="entry name" value="50S RIBOSOMAL PROTEIN L21"/>
    <property type="match status" value="1"/>
</dbReference>
<dbReference type="PANTHER" id="PTHR21349:SF0">
    <property type="entry name" value="LARGE RIBOSOMAL SUBUNIT PROTEIN BL21M"/>
    <property type="match status" value="1"/>
</dbReference>
<dbReference type="Pfam" id="PF14520">
    <property type="entry name" value="HHH_5"/>
    <property type="match status" value="1"/>
</dbReference>
<dbReference type="Pfam" id="PF00829">
    <property type="entry name" value="Ribosomal_L21p"/>
    <property type="match status" value="1"/>
</dbReference>
<dbReference type="SUPFAM" id="SSF141091">
    <property type="entry name" value="L21p-like"/>
    <property type="match status" value="1"/>
</dbReference>
<organism>
    <name type="scientific">Hyphomonas neptunium (strain ATCC 15444)</name>
    <dbReference type="NCBI Taxonomy" id="228405"/>
    <lineage>
        <taxon>Bacteria</taxon>
        <taxon>Pseudomonadati</taxon>
        <taxon>Pseudomonadota</taxon>
        <taxon>Alphaproteobacteria</taxon>
        <taxon>Hyphomonadales</taxon>
        <taxon>Hyphomonadaceae</taxon>
        <taxon>Hyphomonas</taxon>
    </lineage>
</organism>
<keyword id="KW-1185">Reference proteome</keyword>
<keyword id="KW-0687">Ribonucleoprotein</keyword>
<keyword id="KW-0689">Ribosomal protein</keyword>
<keyword id="KW-0694">RNA-binding</keyword>
<keyword id="KW-0699">rRNA-binding</keyword>
<reference key="1">
    <citation type="journal article" date="2006" name="J. Bacteriol.">
        <title>Comparative genomic evidence for a close relationship between the dimorphic prosthecate bacteria Hyphomonas neptunium and Caulobacter crescentus.</title>
        <authorList>
            <person name="Badger J.H."/>
            <person name="Hoover T.R."/>
            <person name="Brun Y.V."/>
            <person name="Weiner R.M."/>
            <person name="Laub M.T."/>
            <person name="Alexandre G."/>
            <person name="Mrazek J."/>
            <person name="Ren Q."/>
            <person name="Paulsen I.T."/>
            <person name="Nelson K.E."/>
            <person name="Khouri H.M."/>
            <person name="Radune D."/>
            <person name="Sosa J."/>
            <person name="Dodson R.J."/>
            <person name="Sullivan S.A."/>
            <person name="Rosovitz M.J."/>
            <person name="Madupu R."/>
            <person name="Brinkac L.M."/>
            <person name="Durkin A.S."/>
            <person name="Daugherty S.C."/>
            <person name="Kothari S.P."/>
            <person name="Giglio M.G."/>
            <person name="Zhou L."/>
            <person name="Haft D.H."/>
            <person name="Selengut J.D."/>
            <person name="Davidsen T.M."/>
            <person name="Yang Q."/>
            <person name="Zafar N."/>
            <person name="Ward N.L."/>
        </authorList>
    </citation>
    <scope>NUCLEOTIDE SEQUENCE [LARGE SCALE GENOMIC DNA]</scope>
    <source>
        <strain>ATCC 15444</strain>
    </source>
</reference>